<reference key="1">
    <citation type="journal article" date="2009" name="BMC Genomics">
        <title>Comprehensive EST analysis of the symbiotic sea anemone, Anemonia viridis.</title>
        <authorList>
            <person name="Sabourault C."/>
            <person name="Ganot P."/>
            <person name="Deleury E."/>
            <person name="Allemand D."/>
            <person name="Furla P."/>
        </authorList>
    </citation>
    <scope>NUCLEOTIDE SEQUENCE [MRNA]</scope>
</reference>
<reference key="2">
    <citation type="journal article" date="2011" name="BMC Genomics">
        <title>The mining of toxin-like polypeptides from EST database by single residue distribution analysis.</title>
        <authorList>
            <person name="Kozlov S."/>
            <person name="Grishin E."/>
        </authorList>
    </citation>
    <scope>NOMENCLATURE</scope>
</reference>
<reference key="3">
    <citation type="journal article" date="2012" name="Toxicon">
        <title>Development of a rational nomenclature for naming peptide and protein toxins from sea anemones.</title>
        <authorList>
            <person name="Oliveira J.S."/>
            <person name="Fuentes-Silva D."/>
            <person name="King G.F."/>
        </authorList>
    </citation>
    <scope>NOMENCLATURE</scope>
</reference>
<sequence length="70" mass="8443">LVVSVTSRRVRFWDDFERDENFEEERPYLRNVKRACNDYKSSSYCRSVGSRNECGIHKYRMYCRKTCGSC</sequence>
<keyword id="KW-1015">Disulfide bond</keyword>
<keyword id="KW-0872">Ion channel impairing toxin</keyword>
<keyword id="KW-0166">Nematocyst</keyword>
<keyword id="KW-0528">Neurotoxin</keyword>
<keyword id="KW-0632">Potassium channel impairing toxin</keyword>
<keyword id="KW-0964">Secreted</keyword>
<keyword id="KW-0732">Signal</keyword>
<keyword id="KW-0800">Toxin</keyword>
<keyword id="KW-1220">Voltage-gated potassium channel impairing toxin</keyword>
<evidence type="ECO:0000250" key="1">
    <source>
        <dbReference type="UniProtKB" id="P29186"/>
    </source>
</evidence>
<evidence type="ECO:0000255" key="2"/>
<evidence type="ECO:0000255" key="3">
    <source>
        <dbReference type="PROSITE-ProRule" id="PRU01005"/>
    </source>
</evidence>
<evidence type="ECO:0000303" key="4">
    <source>
    </source>
</evidence>
<evidence type="ECO:0000303" key="5">
    <source>
    </source>
</evidence>
<evidence type="ECO:0000305" key="6"/>
<evidence type="ECO:0000305" key="7">
    <source>
    </source>
</evidence>
<proteinExistence type="evidence at transcript level"/>
<name>K1BBA_ANEVI</name>
<comment type="function">
    <text evidence="1">Inhibits voltage-gated potassium channels (Kv1/KCNA).</text>
</comment>
<comment type="subcellular location">
    <subcellularLocation>
        <location evidence="6">Secreted</location>
    </subcellularLocation>
    <subcellularLocation>
        <location evidence="6">Nematocyst</location>
    </subcellularLocation>
</comment>
<comment type="similarity">
    <text>Belongs to the sea anemone type 1 potassium channel toxin family. Type 1b subfamily.</text>
</comment>
<comment type="caution">
    <text evidence="6">Opinions are divided on whether Anemonia viridis (Forsskal, 1775) and Anemonia sulcata (Pennant, 1777) are separate species.</text>
</comment>
<feature type="signal peptide" evidence="2">
    <location>
        <begin position="1" status="less than"/>
        <end status="unknown"/>
    </location>
</feature>
<feature type="propeptide" id="PRO_0000433749" evidence="7">
    <location>
        <begin status="unknown"/>
        <end position="32"/>
    </location>
</feature>
<feature type="chain" id="PRO_0000433750" description="U-actitoxin-Avd11a">
    <location>
        <begin position="35"/>
        <end position="70"/>
    </location>
</feature>
<feature type="domain" description="ShKT" evidence="3">
    <location>
        <begin position="36"/>
        <end position="70"/>
    </location>
</feature>
<feature type="region of interest" description="Crucial for binding to potassium channels" evidence="1">
    <location>
        <begin position="58"/>
        <end position="59"/>
    </location>
</feature>
<feature type="disulfide bond" evidence="3">
    <location>
        <begin position="36"/>
        <end position="70"/>
    </location>
</feature>
<feature type="disulfide bond" evidence="3">
    <location>
        <begin position="45"/>
        <end position="63"/>
    </location>
</feature>
<feature type="disulfide bond" evidence="3">
    <location>
        <begin position="54"/>
        <end position="67"/>
    </location>
</feature>
<feature type="non-terminal residue" evidence="4">
    <location>
        <position position="1"/>
    </location>
</feature>
<protein>
    <recommendedName>
        <fullName evidence="5">U-actitoxin-Avd11a</fullName>
        <shortName evidence="5">U-AITX-Avd11a</shortName>
    </recommendedName>
    <alternativeName>
        <fullName evidence="4">Potassium channel toxin avtx-11</fullName>
    </alternativeName>
</protein>
<accession>P0DN05</accession>
<organism>
    <name type="scientific">Anemonia viridis</name>
    <name type="common">Snakelocks anemone</name>
    <dbReference type="NCBI Taxonomy" id="51769"/>
    <lineage>
        <taxon>Eukaryota</taxon>
        <taxon>Metazoa</taxon>
        <taxon>Cnidaria</taxon>
        <taxon>Anthozoa</taxon>
        <taxon>Hexacorallia</taxon>
        <taxon>Actiniaria</taxon>
        <taxon>Actiniidae</taxon>
        <taxon>Anemonia</taxon>
    </lineage>
</organism>
<dbReference type="EMBL" id="FK736704">
    <property type="status" value="NOT_ANNOTATED_CDS"/>
    <property type="molecule type" value="mRNA"/>
</dbReference>
<dbReference type="SMR" id="P0DN05"/>
<dbReference type="GO" id="GO:0005576">
    <property type="term" value="C:extracellular region"/>
    <property type="evidence" value="ECO:0007669"/>
    <property type="project" value="UniProtKB-SubCell"/>
</dbReference>
<dbReference type="GO" id="GO:0042151">
    <property type="term" value="C:nematocyst"/>
    <property type="evidence" value="ECO:0007669"/>
    <property type="project" value="UniProtKB-SubCell"/>
</dbReference>
<dbReference type="GO" id="GO:0015459">
    <property type="term" value="F:potassium channel regulator activity"/>
    <property type="evidence" value="ECO:0007669"/>
    <property type="project" value="UniProtKB-KW"/>
</dbReference>
<dbReference type="GO" id="GO:0090729">
    <property type="term" value="F:toxin activity"/>
    <property type="evidence" value="ECO:0007669"/>
    <property type="project" value="UniProtKB-KW"/>
</dbReference>
<dbReference type="InterPro" id="IPR003582">
    <property type="entry name" value="ShKT_dom"/>
</dbReference>
<dbReference type="SUPFAM" id="SSF57546">
    <property type="entry name" value="Crisp domain-like"/>
    <property type="match status" value="1"/>
</dbReference>
<dbReference type="PROSITE" id="PS51670">
    <property type="entry name" value="SHKT"/>
    <property type="match status" value="1"/>
</dbReference>